<keyword id="KW-0963">Cytoplasm</keyword>
<keyword id="KW-0342">GTP-binding</keyword>
<keyword id="KW-0460">Magnesium</keyword>
<keyword id="KW-0479">Metal-binding</keyword>
<keyword id="KW-0501">Molybdenum cofactor biosynthesis</keyword>
<keyword id="KW-0547">Nucleotide-binding</keyword>
<keyword id="KW-0808">Transferase</keyword>
<evidence type="ECO:0000255" key="1">
    <source>
        <dbReference type="HAMAP-Rule" id="MF_00316"/>
    </source>
</evidence>
<reference key="1">
    <citation type="submission" date="2005-10" db="EMBL/GenBank/DDBJ databases">
        <title>Complete sequence of chromosome 1 of Burkholderia sp. 383.</title>
        <authorList>
            <consortium name="US DOE Joint Genome Institute"/>
            <person name="Copeland A."/>
            <person name="Lucas S."/>
            <person name="Lapidus A."/>
            <person name="Barry K."/>
            <person name="Detter J.C."/>
            <person name="Glavina T."/>
            <person name="Hammon N."/>
            <person name="Israni S."/>
            <person name="Pitluck S."/>
            <person name="Chain P."/>
            <person name="Malfatti S."/>
            <person name="Shin M."/>
            <person name="Vergez L."/>
            <person name="Schmutz J."/>
            <person name="Larimer F."/>
            <person name="Land M."/>
            <person name="Kyrpides N."/>
            <person name="Lykidis A."/>
            <person name="Richardson P."/>
        </authorList>
    </citation>
    <scope>NUCLEOTIDE SEQUENCE [LARGE SCALE GENOMIC DNA]</scope>
    <source>
        <strain>ATCC 17760 / DSM 23089 / LMG 22485 / NCIMB 9086 / R18194 / 383</strain>
    </source>
</reference>
<gene>
    <name evidence="1" type="primary">mobA</name>
    <name type="ordered locus">Bcep18194_A4221</name>
</gene>
<protein>
    <recommendedName>
        <fullName evidence="1">Molybdenum cofactor guanylyltransferase</fullName>
        <shortName evidence="1">MoCo guanylyltransferase</shortName>
        <ecNumber evidence="1">2.7.7.77</ecNumber>
    </recommendedName>
    <alternativeName>
        <fullName evidence="1">GTP:molybdopterin guanylyltransferase</fullName>
    </alternativeName>
    <alternativeName>
        <fullName evidence="1">Mo-MPT guanylyltransferase</fullName>
    </alternativeName>
    <alternativeName>
        <fullName evidence="1">Molybdopterin guanylyltransferase</fullName>
    </alternativeName>
    <alternativeName>
        <fullName evidence="1">Molybdopterin-guanine dinucleotide synthase</fullName>
        <shortName evidence="1">MGD synthase</shortName>
    </alternativeName>
</protein>
<comment type="function">
    <text evidence="1">Transfers a GMP moiety from GTP to Mo-molybdopterin (Mo-MPT) cofactor (Moco or molybdenum cofactor) to form Mo-molybdopterin guanine dinucleotide (Mo-MGD) cofactor.</text>
</comment>
<comment type="catalytic activity">
    <reaction evidence="1">
        <text>Mo-molybdopterin + GTP + H(+) = Mo-molybdopterin guanine dinucleotide + diphosphate</text>
        <dbReference type="Rhea" id="RHEA:34243"/>
        <dbReference type="ChEBI" id="CHEBI:15378"/>
        <dbReference type="ChEBI" id="CHEBI:33019"/>
        <dbReference type="ChEBI" id="CHEBI:37565"/>
        <dbReference type="ChEBI" id="CHEBI:71302"/>
        <dbReference type="ChEBI" id="CHEBI:71310"/>
        <dbReference type="EC" id="2.7.7.77"/>
    </reaction>
</comment>
<comment type="cofactor">
    <cofactor evidence="1">
        <name>Mg(2+)</name>
        <dbReference type="ChEBI" id="CHEBI:18420"/>
    </cofactor>
</comment>
<comment type="subunit">
    <text evidence="1">Monomer.</text>
</comment>
<comment type="subcellular location">
    <subcellularLocation>
        <location evidence="1">Cytoplasm</location>
    </subcellularLocation>
</comment>
<comment type="domain">
    <text evidence="1">The N-terminal domain determines nucleotide recognition and specific binding, while the C-terminal domain determines the specific binding to the target protein.</text>
</comment>
<comment type="similarity">
    <text evidence="1">Belongs to the MobA family.</text>
</comment>
<name>MOBA_BURL3</name>
<sequence length="205" mass="21928">MPASASPSIAGLLLAGGRATRMDGVDKGLQLLDGTPLALHVLSRLSPQVDETLISANRHADRYAELGAPFDARIVADETPDFPGPLAGLLAGMRAARAPLVACSPCDTPYLPADLVARLQAALDAQQADIAMAVTVDAQHVRSPQPTFALLRTSLADDLAARLAAGDRKVRAWYARHKTVEVEFHDERAFYNANSWQELAALARR</sequence>
<accession>Q39I98</accession>
<dbReference type="EC" id="2.7.7.77" evidence="1"/>
<dbReference type="EMBL" id="CP000151">
    <property type="protein sequence ID" value="ABB07818.1"/>
    <property type="molecule type" value="Genomic_DNA"/>
</dbReference>
<dbReference type="RefSeq" id="WP_011351392.1">
    <property type="nucleotide sequence ID" value="NC_007510.1"/>
</dbReference>
<dbReference type="SMR" id="Q39I98"/>
<dbReference type="GeneID" id="45094122"/>
<dbReference type="KEGG" id="bur:Bcep18194_A4221"/>
<dbReference type="PATRIC" id="fig|482957.22.peg.1112"/>
<dbReference type="HOGENOM" id="CLU_055597_5_1_4"/>
<dbReference type="Proteomes" id="UP000002705">
    <property type="component" value="Chromosome 1"/>
</dbReference>
<dbReference type="GO" id="GO:0005737">
    <property type="term" value="C:cytoplasm"/>
    <property type="evidence" value="ECO:0007669"/>
    <property type="project" value="UniProtKB-SubCell"/>
</dbReference>
<dbReference type="GO" id="GO:0005525">
    <property type="term" value="F:GTP binding"/>
    <property type="evidence" value="ECO:0007669"/>
    <property type="project" value="UniProtKB-UniRule"/>
</dbReference>
<dbReference type="GO" id="GO:0046872">
    <property type="term" value="F:metal ion binding"/>
    <property type="evidence" value="ECO:0007669"/>
    <property type="project" value="UniProtKB-KW"/>
</dbReference>
<dbReference type="GO" id="GO:0061603">
    <property type="term" value="F:molybdenum cofactor guanylyltransferase activity"/>
    <property type="evidence" value="ECO:0007669"/>
    <property type="project" value="UniProtKB-EC"/>
</dbReference>
<dbReference type="GO" id="GO:1902758">
    <property type="term" value="P:bis(molybdopterin guanine dinucleotide)molybdenum biosynthetic process"/>
    <property type="evidence" value="ECO:0007669"/>
    <property type="project" value="TreeGrafter"/>
</dbReference>
<dbReference type="CDD" id="cd02503">
    <property type="entry name" value="MobA"/>
    <property type="match status" value="1"/>
</dbReference>
<dbReference type="Gene3D" id="3.90.550.10">
    <property type="entry name" value="Spore Coat Polysaccharide Biosynthesis Protein SpsA, Chain A"/>
    <property type="match status" value="1"/>
</dbReference>
<dbReference type="HAMAP" id="MF_00316">
    <property type="entry name" value="MobA"/>
    <property type="match status" value="1"/>
</dbReference>
<dbReference type="InterPro" id="IPR025877">
    <property type="entry name" value="MobA-like_NTP_Trfase"/>
</dbReference>
<dbReference type="InterPro" id="IPR013482">
    <property type="entry name" value="Molybde_CF_guanTrfase"/>
</dbReference>
<dbReference type="InterPro" id="IPR029044">
    <property type="entry name" value="Nucleotide-diphossugar_trans"/>
</dbReference>
<dbReference type="NCBIfam" id="TIGR02665">
    <property type="entry name" value="molyb_mobA"/>
    <property type="match status" value="1"/>
</dbReference>
<dbReference type="PANTHER" id="PTHR19136">
    <property type="entry name" value="MOLYBDENUM COFACTOR GUANYLYLTRANSFERASE"/>
    <property type="match status" value="1"/>
</dbReference>
<dbReference type="PANTHER" id="PTHR19136:SF81">
    <property type="entry name" value="MOLYBDENUM COFACTOR GUANYLYLTRANSFERASE"/>
    <property type="match status" value="1"/>
</dbReference>
<dbReference type="Pfam" id="PF12804">
    <property type="entry name" value="NTP_transf_3"/>
    <property type="match status" value="1"/>
</dbReference>
<dbReference type="SUPFAM" id="SSF53448">
    <property type="entry name" value="Nucleotide-diphospho-sugar transferases"/>
    <property type="match status" value="1"/>
</dbReference>
<proteinExistence type="inferred from homology"/>
<feature type="chain" id="PRO_1000019111" description="Molybdenum cofactor guanylyltransferase">
    <location>
        <begin position="1"/>
        <end position="205"/>
    </location>
</feature>
<feature type="binding site" evidence="1">
    <location>
        <begin position="14"/>
        <end position="16"/>
    </location>
    <ligand>
        <name>GTP</name>
        <dbReference type="ChEBI" id="CHEBI:37565"/>
    </ligand>
</feature>
<feature type="binding site" evidence="1">
    <location>
        <position position="27"/>
    </location>
    <ligand>
        <name>GTP</name>
        <dbReference type="ChEBI" id="CHEBI:37565"/>
    </ligand>
</feature>
<feature type="binding site" evidence="1">
    <location>
        <position position="77"/>
    </location>
    <ligand>
        <name>GTP</name>
        <dbReference type="ChEBI" id="CHEBI:37565"/>
    </ligand>
</feature>
<feature type="binding site" evidence="1">
    <location>
        <position position="107"/>
    </location>
    <ligand>
        <name>GTP</name>
        <dbReference type="ChEBI" id="CHEBI:37565"/>
    </ligand>
</feature>
<feature type="binding site" evidence="1">
    <location>
        <position position="107"/>
    </location>
    <ligand>
        <name>Mg(2+)</name>
        <dbReference type="ChEBI" id="CHEBI:18420"/>
    </ligand>
</feature>
<organism>
    <name type="scientific">Burkholderia lata (strain ATCC 17760 / DSM 23089 / LMG 22485 / NCIMB 9086 / R18194 / 383)</name>
    <dbReference type="NCBI Taxonomy" id="482957"/>
    <lineage>
        <taxon>Bacteria</taxon>
        <taxon>Pseudomonadati</taxon>
        <taxon>Pseudomonadota</taxon>
        <taxon>Betaproteobacteria</taxon>
        <taxon>Burkholderiales</taxon>
        <taxon>Burkholderiaceae</taxon>
        <taxon>Burkholderia</taxon>
        <taxon>Burkholderia cepacia complex</taxon>
    </lineage>
</organism>